<feature type="chain" id="PRO_0000125064" description="Large ribosomal subunit protein uL5">
    <location>
        <begin position="1"/>
        <end position="179"/>
    </location>
</feature>
<dbReference type="EMBL" id="AE009441">
    <property type="protein sequence ID" value="AAL65016.1"/>
    <property type="molecule type" value="Genomic_DNA"/>
</dbReference>
<dbReference type="RefSeq" id="WP_011009483.1">
    <property type="nucleotide sequence ID" value="NC_003364.1"/>
</dbReference>
<dbReference type="SMR" id="Q8ZSU7"/>
<dbReference type="FunCoup" id="Q8ZSU7">
    <property type="interactions" value="181"/>
</dbReference>
<dbReference type="STRING" id="178306.PAE3575"/>
<dbReference type="EnsemblBacteria" id="AAL65016">
    <property type="protein sequence ID" value="AAL65016"/>
    <property type="gene ID" value="PAE3575"/>
</dbReference>
<dbReference type="GeneID" id="1466150"/>
<dbReference type="KEGG" id="pai:PAE3575"/>
<dbReference type="PATRIC" id="fig|178306.9.peg.2692"/>
<dbReference type="eggNOG" id="arCOG04092">
    <property type="taxonomic scope" value="Archaea"/>
</dbReference>
<dbReference type="HOGENOM" id="CLU_061015_3_0_2"/>
<dbReference type="InParanoid" id="Q8ZSU7"/>
<dbReference type="Proteomes" id="UP000002439">
    <property type="component" value="Chromosome"/>
</dbReference>
<dbReference type="GO" id="GO:0022625">
    <property type="term" value="C:cytosolic large ribosomal subunit"/>
    <property type="evidence" value="ECO:0000318"/>
    <property type="project" value="GO_Central"/>
</dbReference>
<dbReference type="GO" id="GO:0003723">
    <property type="term" value="F:RNA binding"/>
    <property type="evidence" value="ECO:0000318"/>
    <property type="project" value="GO_Central"/>
</dbReference>
<dbReference type="GO" id="GO:0019843">
    <property type="term" value="F:rRNA binding"/>
    <property type="evidence" value="ECO:0007669"/>
    <property type="project" value="UniProtKB-UniRule"/>
</dbReference>
<dbReference type="GO" id="GO:0003735">
    <property type="term" value="F:structural constituent of ribosome"/>
    <property type="evidence" value="ECO:0000318"/>
    <property type="project" value="GO_Central"/>
</dbReference>
<dbReference type="GO" id="GO:0000049">
    <property type="term" value="F:tRNA binding"/>
    <property type="evidence" value="ECO:0007669"/>
    <property type="project" value="UniProtKB-UniRule"/>
</dbReference>
<dbReference type="GO" id="GO:0006412">
    <property type="term" value="P:translation"/>
    <property type="evidence" value="ECO:0000318"/>
    <property type="project" value="GO_Central"/>
</dbReference>
<dbReference type="FunFam" id="3.30.1440.10:FF:000002">
    <property type="entry name" value="60S ribosomal protein L11"/>
    <property type="match status" value="1"/>
</dbReference>
<dbReference type="Gene3D" id="3.30.1440.10">
    <property type="match status" value="1"/>
</dbReference>
<dbReference type="HAMAP" id="MF_01333_A">
    <property type="entry name" value="Ribosomal_uL5_A"/>
    <property type="match status" value="1"/>
</dbReference>
<dbReference type="InterPro" id="IPR002132">
    <property type="entry name" value="Ribosomal_uL5"/>
</dbReference>
<dbReference type="InterPro" id="IPR022804">
    <property type="entry name" value="Ribosomal_uL5_arc"/>
</dbReference>
<dbReference type="InterPro" id="IPR031309">
    <property type="entry name" value="Ribosomal_uL5_C"/>
</dbReference>
<dbReference type="InterPro" id="IPR022803">
    <property type="entry name" value="Ribosomal_uL5_dom_sf"/>
</dbReference>
<dbReference type="InterPro" id="IPR031310">
    <property type="entry name" value="Ribosomal_uL5_N"/>
</dbReference>
<dbReference type="NCBIfam" id="NF003258">
    <property type="entry name" value="PRK04219.1"/>
    <property type="match status" value="1"/>
</dbReference>
<dbReference type="PANTHER" id="PTHR11994">
    <property type="entry name" value="60S RIBOSOMAL PROTEIN L11-RELATED"/>
    <property type="match status" value="1"/>
</dbReference>
<dbReference type="Pfam" id="PF00281">
    <property type="entry name" value="Ribosomal_L5"/>
    <property type="match status" value="1"/>
</dbReference>
<dbReference type="Pfam" id="PF00673">
    <property type="entry name" value="Ribosomal_L5_C"/>
    <property type="match status" value="1"/>
</dbReference>
<dbReference type="PIRSF" id="PIRSF002161">
    <property type="entry name" value="Ribosomal_L5"/>
    <property type="match status" value="1"/>
</dbReference>
<dbReference type="SUPFAM" id="SSF55282">
    <property type="entry name" value="RL5-like"/>
    <property type="match status" value="1"/>
</dbReference>
<gene>
    <name evidence="1" type="primary">rpl5</name>
    <name type="ordered locus">PAE3575</name>
</gene>
<sequence>MPSWKELVLVKGHPMQRIYIEKVVVNIGVGASGEKLEKAAGLLKELTGAEPSRRRAKKSIKDFGIRKGEPIGVAVTLRRDQAVNFLMRALQAVNNRVKKTSFDDRGNVCFGIKEHILLPGVKYDPAVGIWGMDVCVKLAKPGLRVQLRRRRRSKVGKRQLVTKEEAIEFFQKVLGVQVD</sequence>
<organism>
    <name type="scientific">Pyrobaculum aerophilum (strain ATCC 51768 / DSM 7523 / JCM 9630 / CIP 104966 / NBRC 100827 / IM2)</name>
    <dbReference type="NCBI Taxonomy" id="178306"/>
    <lineage>
        <taxon>Archaea</taxon>
        <taxon>Thermoproteota</taxon>
        <taxon>Thermoprotei</taxon>
        <taxon>Thermoproteales</taxon>
        <taxon>Thermoproteaceae</taxon>
        <taxon>Pyrobaculum</taxon>
    </lineage>
</organism>
<protein>
    <recommendedName>
        <fullName evidence="1">Large ribosomal subunit protein uL5</fullName>
    </recommendedName>
    <alternativeName>
        <fullName evidence="2">50S ribosomal protein L5</fullName>
    </alternativeName>
</protein>
<keyword id="KW-1185">Reference proteome</keyword>
<keyword id="KW-0687">Ribonucleoprotein</keyword>
<keyword id="KW-0689">Ribosomal protein</keyword>
<keyword id="KW-0694">RNA-binding</keyword>
<keyword id="KW-0699">rRNA-binding</keyword>
<keyword id="KW-0820">tRNA-binding</keyword>
<reference key="1">
    <citation type="journal article" date="2002" name="Proc. Natl. Acad. Sci. U.S.A.">
        <title>Genome sequence of the hyperthermophilic crenarchaeon Pyrobaculum aerophilum.</title>
        <authorList>
            <person name="Fitz-Gibbon S.T."/>
            <person name="Ladner H."/>
            <person name="Kim U.-J."/>
            <person name="Stetter K.O."/>
            <person name="Simon M.I."/>
            <person name="Miller J.H."/>
        </authorList>
    </citation>
    <scope>NUCLEOTIDE SEQUENCE [LARGE SCALE GENOMIC DNA]</scope>
    <source>
        <strain>ATCC 51768 / DSM 7523 / JCM 9630 / CIP 104966 / NBRC 100827 / IM2</strain>
    </source>
</reference>
<comment type="function">
    <text evidence="1">This is one of the proteins that bind and probably mediate the attachment of the 5S RNA into the large ribosomal subunit, where it forms part of the central protuberance. In the 70S ribosome it contacts protein S13 of the 30S subunit (bridge B1b), connecting the 2 subunits; this bridge is implicated in subunit movement. May contact the P site tRNA; the 5S rRNA and some of its associated proteins might help stabilize positioning of ribosome-bound tRNAs.</text>
</comment>
<comment type="subunit">
    <text evidence="1">Part of the 50S ribosomal subunit; contacts the 5S rRNA and probably tRNA. Forms a bridge to the 30S subunit in the 70S ribosome.</text>
</comment>
<comment type="similarity">
    <text evidence="1">Belongs to the universal ribosomal protein uL5 family.</text>
</comment>
<accession>Q8ZSU7</accession>
<evidence type="ECO:0000255" key="1">
    <source>
        <dbReference type="HAMAP-Rule" id="MF_01333"/>
    </source>
</evidence>
<evidence type="ECO:0000305" key="2"/>
<proteinExistence type="inferred from homology"/>
<name>RL5_PYRAE</name>